<name>TRF3_THEVO</name>
<proteinExistence type="inferred from homology"/>
<organism>
    <name type="scientific">Thermoplasma volcanium (strain ATCC 51530 / DSM 4299 / JCM 9571 / NBRC 15438 / GSS1)</name>
    <dbReference type="NCBI Taxonomy" id="273116"/>
    <lineage>
        <taxon>Archaea</taxon>
        <taxon>Methanobacteriati</taxon>
        <taxon>Thermoplasmatota</taxon>
        <taxon>Thermoplasmata</taxon>
        <taxon>Thermoplasmatales</taxon>
        <taxon>Thermoplasmataceae</taxon>
        <taxon>Thermoplasma</taxon>
    </lineage>
</organism>
<feature type="chain" id="PRO_0000095113" description="Tricorn protease-interacting factor F3">
    <location>
        <begin position="1"/>
        <end position="779"/>
    </location>
</feature>
<feature type="active site" description="Proton acceptor" evidence="2">
    <location>
        <position position="267"/>
    </location>
</feature>
<feature type="binding site" evidence="1">
    <location>
        <position position="102"/>
    </location>
    <ligand>
        <name>substrate</name>
    </ligand>
</feature>
<feature type="binding site" evidence="1">
    <location>
        <begin position="231"/>
        <end position="235"/>
    </location>
    <ligand>
        <name>substrate</name>
    </ligand>
</feature>
<feature type="binding site" evidence="2">
    <location>
        <position position="266"/>
    </location>
    <ligand>
        <name>Zn(2+)</name>
        <dbReference type="ChEBI" id="CHEBI:29105"/>
        <note>catalytic</note>
    </ligand>
</feature>
<feature type="binding site" evidence="2">
    <location>
        <position position="270"/>
    </location>
    <ligand>
        <name>Zn(2+)</name>
        <dbReference type="ChEBI" id="CHEBI:29105"/>
        <note>catalytic</note>
    </ligand>
</feature>
<feature type="binding site" evidence="2">
    <location>
        <position position="289"/>
    </location>
    <ligand>
        <name>Zn(2+)</name>
        <dbReference type="ChEBI" id="CHEBI:29105"/>
        <note>catalytic</note>
    </ligand>
</feature>
<feature type="site" description="Transition state stabilizer" evidence="1">
    <location>
        <position position="352"/>
    </location>
</feature>
<dbReference type="EC" id="3.4.11.-"/>
<dbReference type="EMBL" id="BA000011">
    <property type="protein sequence ID" value="BAB59956.1"/>
    <property type="molecule type" value="Genomic_DNA"/>
</dbReference>
<dbReference type="RefSeq" id="WP_010917058.1">
    <property type="nucleotide sequence ID" value="NC_002689.2"/>
</dbReference>
<dbReference type="SMR" id="Q97AJ6"/>
<dbReference type="STRING" id="273116.gene:9381604"/>
<dbReference type="MEROPS" id="M01.021"/>
<dbReference type="PaxDb" id="273116-14325030"/>
<dbReference type="GeneID" id="1441906"/>
<dbReference type="KEGG" id="tvo:TVG0817891"/>
<dbReference type="eggNOG" id="arCOG02969">
    <property type="taxonomic scope" value="Archaea"/>
</dbReference>
<dbReference type="HOGENOM" id="CLU_003705_0_1_2"/>
<dbReference type="OrthoDB" id="139771at2157"/>
<dbReference type="PhylomeDB" id="Q97AJ6"/>
<dbReference type="Proteomes" id="UP000001017">
    <property type="component" value="Chromosome"/>
</dbReference>
<dbReference type="GO" id="GO:0005737">
    <property type="term" value="C:cytoplasm"/>
    <property type="evidence" value="ECO:0007669"/>
    <property type="project" value="UniProtKB-SubCell"/>
</dbReference>
<dbReference type="GO" id="GO:0005615">
    <property type="term" value="C:extracellular space"/>
    <property type="evidence" value="ECO:0007669"/>
    <property type="project" value="TreeGrafter"/>
</dbReference>
<dbReference type="GO" id="GO:0016020">
    <property type="term" value="C:membrane"/>
    <property type="evidence" value="ECO:0007669"/>
    <property type="project" value="TreeGrafter"/>
</dbReference>
<dbReference type="GO" id="GO:0070006">
    <property type="term" value="F:metalloaminopeptidase activity"/>
    <property type="evidence" value="ECO:0007669"/>
    <property type="project" value="TreeGrafter"/>
</dbReference>
<dbReference type="GO" id="GO:0042277">
    <property type="term" value="F:peptide binding"/>
    <property type="evidence" value="ECO:0007669"/>
    <property type="project" value="TreeGrafter"/>
</dbReference>
<dbReference type="GO" id="GO:0008270">
    <property type="term" value="F:zinc ion binding"/>
    <property type="evidence" value="ECO:0007669"/>
    <property type="project" value="InterPro"/>
</dbReference>
<dbReference type="GO" id="GO:0043171">
    <property type="term" value="P:peptide catabolic process"/>
    <property type="evidence" value="ECO:0007669"/>
    <property type="project" value="TreeGrafter"/>
</dbReference>
<dbReference type="GO" id="GO:0006508">
    <property type="term" value="P:proteolysis"/>
    <property type="evidence" value="ECO:0007669"/>
    <property type="project" value="UniProtKB-KW"/>
</dbReference>
<dbReference type="CDD" id="cd09601">
    <property type="entry name" value="M1_APN-Q_like"/>
    <property type="match status" value="1"/>
</dbReference>
<dbReference type="FunFam" id="1.10.390.10:FF:000006">
    <property type="entry name" value="Puromycin-sensitive aminopeptidase"/>
    <property type="match status" value="1"/>
</dbReference>
<dbReference type="Gene3D" id="1.25.50.20">
    <property type="match status" value="1"/>
</dbReference>
<dbReference type="Gene3D" id="2.60.40.1910">
    <property type="match status" value="1"/>
</dbReference>
<dbReference type="Gene3D" id="1.10.390.10">
    <property type="entry name" value="Neutral Protease Domain 2"/>
    <property type="match status" value="1"/>
</dbReference>
<dbReference type="Gene3D" id="2.60.40.1730">
    <property type="entry name" value="tricorn interacting facor f3 domain"/>
    <property type="match status" value="1"/>
</dbReference>
<dbReference type="InterPro" id="IPR045357">
    <property type="entry name" value="Aminopeptidase_N-like_N"/>
</dbReference>
<dbReference type="InterPro" id="IPR042097">
    <property type="entry name" value="Aminopeptidase_N-like_N_sf"/>
</dbReference>
<dbReference type="InterPro" id="IPR024571">
    <property type="entry name" value="ERAP1-like_C_dom"/>
</dbReference>
<dbReference type="InterPro" id="IPR034016">
    <property type="entry name" value="M1_APN-typ"/>
</dbReference>
<dbReference type="InterPro" id="IPR001930">
    <property type="entry name" value="Peptidase_M1"/>
</dbReference>
<dbReference type="InterPro" id="IPR050344">
    <property type="entry name" value="Peptidase_M1_aminopeptidases"/>
</dbReference>
<dbReference type="InterPro" id="IPR014782">
    <property type="entry name" value="Peptidase_M1_dom"/>
</dbReference>
<dbReference type="InterPro" id="IPR027268">
    <property type="entry name" value="Peptidase_M4/M1_CTD_sf"/>
</dbReference>
<dbReference type="PANTHER" id="PTHR11533">
    <property type="entry name" value="PROTEASE M1 ZINC METALLOPROTEASE"/>
    <property type="match status" value="1"/>
</dbReference>
<dbReference type="PANTHER" id="PTHR11533:SF174">
    <property type="entry name" value="PUROMYCIN-SENSITIVE AMINOPEPTIDASE-RELATED"/>
    <property type="match status" value="1"/>
</dbReference>
<dbReference type="Pfam" id="PF11838">
    <property type="entry name" value="ERAP1_C"/>
    <property type="match status" value="1"/>
</dbReference>
<dbReference type="Pfam" id="PF01433">
    <property type="entry name" value="Peptidase_M1"/>
    <property type="match status" value="1"/>
</dbReference>
<dbReference type="Pfam" id="PF17900">
    <property type="entry name" value="Peptidase_M1_N"/>
    <property type="match status" value="1"/>
</dbReference>
<dbReference type="PRINTS" id="PR00756">
    <property type="entry name" value="ALADIPTASE"/>
</dbReference>
<dbReference type="SUPFAM" id="SSF63737">
    <property type="entry name" value="Leukotriene A4 hydrolase N-terminal domain"/>
    <property type="match status" value="1"/>
</dbReference>
<dbReference type="SUPFAM" id="SSF55486">
    <property type="entry name" value="Metalloproteases ('zincins'), catalytic domain"/>
    <property type="match status" value="1"/>
</dbReference>
<dbReference type="PROSITE" id="PS00142">
    <property type="entry name" value="ZINC_PROTEASE"/>
    <property type="match status" value="1"/>
</dbReference>
<keyword id="KW-0031">Aminopeptidase</keyword>
<keyword id="KW-0963">Cytoplasm</keyword>
<keyword id="KW-0378">Hydrolase</keyword>
<keyword id="KW-0479">Metal-binding</keyword>
<keyword id="KW-0482">Metalloprotease</keyword>
<keyword id="KW-0645">Protease</keyword>
<keyword id="KW-0862">Zinc</keyword>
<sequence>MDISEYDLTLDLDLQSKTFHGTETISASSGDFVLDAVGFNIEWIKVNGSDAKFEYDGNLLKINGLETAQKVEISYSGKISDSLSGIYFAGRESNGMVTTHFEATDARRMFPCIDHPAYKAVFSITLVIDKDYDAISNMPIKKVETSDRKIVEFEKTPRMSTYLLYIGVGKFKYASERYKDREIILASLKDIKSKYPIDIAKRSIEFYEGYFGIPYALPKMHLISVPEFGAGAMENWGAITFREIYLDIADNSAASTLRLSANVIAHEIAHQWFGDLVTMKWWNDLWLNESFATFMSYKTMDTIHPEWQFWGDFFVSRTSGALRSDSLKNTHPIEVDVKDPDEISQIFDEISYGKGASILRMIEDYVGAEDFRKGISKYLKEHAYGNAEGSDLWNAIETESGKPVNRIMEAWITKAGYPILKVSQDKTGIKVMQSRFFLGGGESTDRWPVPVKMRLNNGISQMLLEEESTVITDKDVIKLNADNLGFYRVNYDDETFSKIIENMDKLTPLDRVGLVDDLFAFLMAGVITPDTYKNRIKSFFNDKDANVISNIVNQFEYLRIITHYFDADAREFLGTAIRYLESADDENLKIAYGKASRLLALLDEAYCETLAPRFSNFEQQTPELKSAIATAYALSTGDVKGMVEKYRSLDRDEDKVKIISGFGKLKSSTDLSVVSGMIEKGEIKKQDMLSFYLSALETMAGREYIYSNLENIVKNVIRYFTGNRTASRTVEQILPVIGLTHPDAASIIERIGSKNTTMGLAKGKELLEVNRSLLERIGH</sequence>
<accession>Q97AJ6</accession>
<gene>
    <name type="primary">trf3</name>
    <name type="ordered locus">TV0814</name>
    <name type="ORF">TVG0817891</name>
</gene>
<reference key="1">
    <citation type="journal article" date="2000" name="Proc. Natl. Acad. Sci. U.S.A.">
        <title>Archaeal adaptation to higher temperatures revealed by genomic sequence of Thermoplasma volcanium.</title>
        <authorList>
            <person name="Kawashima T."/>
            <person name="Amano N."/>
            <person name="Koike H."/>
            <person name="Makino S."/>
            <person name="Higuchi S."/>
            <person name="Kawashima-Ohya Y."/>
            <person name="Watanabe K."/>
            <person name="Yamazaki M."/>
            <person name="Kanehori K."/>
            <person name="Kawamoto T."/>
            <person name="Nunoshiba T."/>
            <person name="Yamamoto Y."/>
            <person name="Aramaki H."/>
            <person name="Makino K."/>
            <person name="Suzuki M."/>
        </authorList>
    </citation>
    <scope>NUCLEOTIDE SEQUENCE [LARGE SCALE GENOMIC DNA]</scope>
    <source>
        <strain>ATCC 51530 / DSM 4299 / JCM 9571 / NBRC 15438 / GSS1</strain>
    </source>
</reference>
<protein>
    <recommendedName>
        <fullName>Tricorn protease-interacting factor F3</fullName>
        <ecNumber>3.4.11.-</ecNumber>
    </recommendedName>
</protein>
<evidence type="ECO:0000250" key="1"/>
<evidence type="ECO:0000255" key="2">
    <source>
        <dbReference type="PROSITE-ProRule" id="PRU10095"/>
    </source>
</evidence>
<evidence type="ECO:0000305" key="3"/>
<comment type="function">
    <text evidence="1">Proteases F1, F2 and F3 degrade oligopeptides produced by Tricorn (themselves probably produced by the proteasome), yielding free amino acids.</text>
</comment>
<comment type="cofactor">
    <cofactor evidence="1">
        <name>Zn(2+)</name>
        <dbReference type="ChEBI" id="CHEBI:29105"/>
    </cofactor>
    <text evidence="1">Binds 1 zinc ion per subunit.</text>
</comment>
<comment type="subunit">
    <text evidence="1">Part of the tricorn proteolytic complex.</text>
</comment>
<comment type="subcellular location">
    <subcellularLocation>
        <location evidence="1">Cytoplasm</location>
    </subcellularLocation>
</comment>
<comment type="similarity">
    <text evidence="3">Belongs to the peptidase M1 family.</text>
</comment>